<organism>
    <name type="scientific">Methanosphaerula palustris (strain ATCC BAA-1556 / DSM 19958 / E1-9c)</name>
    <dbReference type="NCBI Taxonomy" id="521011"/>
    <lineage>
        <taxon>Archaea</taxon>
        <taxon>Methanobacteriati</taxon>
        <taxon>Methanobacteriota</taxon>
        <taxon>Stenosarchaea group</taxon>
        <taxon>Methanomicrobia</taxon>
        <taxon>Methanomicrobiales</taxon>
        <taxon>Methanoregulaceae</taxon>
        <taxon>Methanosphaerula</taxon>
    </lineage>
</organism>
<gene>
    <name evidence="1" type="primary">kdpC</name>
    <name type="ordered locus">Mpal_2486</name>
</gene>
<evidence type="ECO:0000255" key="1">
    <source>
        <dbReference type="HAMAP-Rule" id="MF_00276"/>
    </source>
</evidence>
<comment type="function">
    <text evidence="1">Part of the high-affinity ATP-driven potassium transport (or Kdp) system, which catalyzes the hydrolysis of ATP coupled with the electrogenic transport of potassium into the cytoplasm. This subunit acts as a catalytic chaperone that increases the ATP-binding affinity of the ATP-hydrolyzing subunit KdpB by the formation of a transient KdpB/KdpC/ATP ternary complex.</text>
</comment>
<comment type="subunit">
    <text evidence="1">The system is composed of three essential subunits: KdpA, KdpB and KdpC.</text>
</comment>
<comment type="subcellular location">
    <subcellularLocation>
        <location evidence="1">Cell membrane</location>
        <topology evidence="1">Single-pass membrane protein</topology>
    </subcellularLocation>
</comment>
<comment type="similarity">
    <text evidence="1">Belongs to the KdpC family.</text>
</comment>
<proteinExistence type="inferred from homology"/>
<protein>
    <recommendedName>
        <fullName evidence="1">Potassium-transporting ATPase KdpC subunit</fullName>
    </recommendedName>
    <alternativeName>
        <fullName evidence="1">ATP phosphohydrolase [potassium-transporting] C chain</fullName>
    </alternativeName>
    <alternativeName>
        <fullName evidence="1">Potassium-binding and translocating subunit C</fullName>
    </alternativeName>
    <alternativeName>
        <fullName evidence="1">Potassium-translocating ATPase C chain</fullName>
    </alternativeName>
</protein>
<name>KDPC_METPE</name>
<dbReference type="EMBL" id="CP001338">
    <property type="protein sequence ID" value="ACL17761.1"/>
    <property type="molecule type" value="Genomic_DNA"/>
</dbReference>
<dbReference type="RefSeq" id="WP_012619080.1">
    <property type="nucleotide sequence ID" value="NC_011832.1"/>
</dbReference>
<dbReference type="SMR" id="B8GER0"/>
<dbReference type="STRING" id="521011.Mpal_2486"/>
<dbReference type="GeneID" id="7271655"/>
<dbReference type="KEGG" id="mpl:Mpal_2486"/>
<dbReference type="eggNOG" id="arCOG04805">
    <property type="taxonomic scope" value="Archaea"/>
</dbReference>
<dbReference type="HOGENOM" id="CLU_077094_1_0_2"/>
<dbReference type="OrthoDB" id="8035at2157"/>
<dbReference type="Proteomes" id="UP000002457">
    <property type="component" value="Chromosome"/>
</dbReference>
<dbReference type="GO" id="GO:0005886">
    <property type="term" value="C:plasma membrane"/>
    <property type="evidence" value="ECO:0007669"/>
    <property type="project" value="UniProtKB-SubCell"/>
</dbReference>
<dbReference type="GO" id="GO:0005524">
    <property type="term" value="F:ATP binding"/>
    <property type="evidence" value="ECO:0007669"/>
    <property type="project" value="UniProtKB-UniRule"/>
</dbReference>
<dbReference type="GO" id="GO:0008556">
    <property type="term" value="F:P-type potassium transmembrane transporter activity"/>
    <property type="evidence" value="ECO:0007669"/>
    <property type="project" value="InterPro"/>
</dbReference>
<dbReference type="HAMAP" id="MF_00276">
    <property type="entry name" value="KdpC"/>
    <property type="match status" value="1"/>
</dbReference>
<dbReference type="InterPro" id="IPR003820">
    <property type="entry name" value="KdpC"/>
</dbReference>
<dbReference type="NCBIfam" id="NF001454">
    <property type="entry name" value="PRK00315.1"/>
    <property type="match status" value="1"/>
</dbReference>
<dbReference type="PANTHER" id="PTHR30042">
    <property type="entry name" value="POTASSIUM-TRANSPORTING ATPASE C CHAIN"/>
    <property type="match status" value="1"/>
</dbReference>
<dbReference type="PANTHER" id="PTHR30042:SF2">
    <property type="entry name" value="POTASSIUM-TRANSPORTING ATPASE KDPC SUBUNIT"/>
    <property type="match status" value="1"/>
</dbReference>
<dbReference type="Pfam" id="PF02669">
    <property type="entry name" value="KdpC"/>
    <property type="match status" value="1"/>
</dbReference>
<dbReference type="PIRSF" id="PIRSF001296">
    <property type="entry name" value="K_ATPase_KdpC"/>
    <property type="match status" value="1"/>
</dbReference>
<keyword id="KW-0067">ATP-binding</keyword>
<keyword id="KW-1003">Cell membrane</keyword>
<keyword id="KW-0406">Ion transport</keyword>
<keyword id="KW-0472">Membrane</keyword>
<keyword id="KW-0547">Nucleotide-binding</keyword>
<keyword id="KW-0630">Potassium</keyword>
<keyword id="KW-0633">Potassium transport</keyword>
<keyword id="KW-1185">Reference proteome</keyword>
<keyword id="KW-0812">Transmembrane</keyword>
<keyword id="KW-1133">Transmembrane helix</keyword>
<keyword id="KW-0813">Transport</keyword>
<reference key="1">
    <citation type="journal article" date="2015" name="Genome Announc.">
        <title>Complete Genome Sequence of Methanosphaerula palustris E1-9CT, a Hydrogenotrophic Methanogen Isolated from a Minerotrophic Fen Peatland.</title>
        <authorList>
            <person name="Cadillo-Quiroz H."/>
            <person name="Browne P."/>
            <person name="Kyrpides N."/>
            <person name="Woyke T."/>
            <person name="Goodwin L."/>
            <person name="Detter C."/>
            <person name="Yavitt J.B."/>
            <person name="Zinder S.H."/>
        </authorList>
    </citation>
    <scope>NUCLEOTIDE SEQUENCE [LARGE SCALE GENOMIC DNA]</scope>
    <source>
        <strain>ATCC BAA-1556 / DSM 19958 / E1-9c</strain>
    </source>
</reference>
<accession>B8GER0</accession>
<feature type="chain" id="PRO_1000132521" description="Potassium-transporting ATPase KdpC subunit">
    <location>
        <begin position="1"/>
        <end position="186"/>
    </location>
</feature>
<feature type="transmembrane region" description="Helical" evidence="1">
    <location>
        <begin position="9"/>
        <end position="29"/>
    </location>
</feature>
<sequence length="186" mass="19282">MTLRASLRAAVVLFGGCLLVLGLLYPLAMTGIAGVVFPVQAHGSLMYDVNGSVSGSELIARPVTDPRYFQPRPSAVSYNASASGGSNLGPTNPVFLDQVNTSIASLRDAGVTGPIPAELVMASASGLDPDLSVEAALVQAPAVAAARNSSVDEIRALVIAHRVTDLMPFHPEYVNVNTLNQALDGR</sequence>